<reference evidence="9" key="1">
    <citation type="journal article" date="2002" name="Nature">
        <title>Genome sequence of the human malaria parasite Plasmodium falciparum.</title>
        <authorList>
            <person name="Gardner M.J."/>
            <person name="Hall N."/>
            <person name="Fung E."/>
            <person name="White O."/>
            <person name="Berriman M."/>
            <person name="Hyman R.W."/>
            <person name="Carlton J.M."/>
            <person name="Pain A."/>
            <person name="Nelson K.E."/>
            <person name="Bowman S."/>
            <person name="Paulsen I.T."/>
            <person name="James K.D."/>
            <person name="Eisen J.A."/>
            <person name="Rutherford K.M."/>
            <person name="Salzberg S.L."/>
            <person name="Craig A."/>
            <person name="Kyes S."/>
            <person name="Chan M.-S."/>
            <person name="Nene V."/>
            <person name="Shallom S.J."/>
            <person name="Suh B."/>
            <person name="Peterson J."/>
            <person name="Angiuoli S."/>
            <person name="Pertea M."/>
            <person name="Allen J."/>
            <person name="Selengut J."/>
            <person name="Haft D."/>
            <person name="Mather M.W."/>
            <person name="Vaidya A.B."/>
            <person name="Martin D.M.A."/>
            <person name="Fairlamb A.H."/>
            <person name="Fraunholz M.J."/>
            <person name="Roos D.S."/>
            <person name="Ralph S.A."/>
            <person name="McFadden G.I."/>
            <person name="Cummings L.M."/>
            <person name="Subramanian G.M."/>
            <person name="Mungall C."/>
            <person name="Venter J.C."/>
            <person name="Carucci D.J."/>
            <person name="Hoffman S.L."/>
            <person name="Newbold C."/>
            <person name="Davis R.W."/>
            <person name="Fraser C.M."/>
            <person name="Barrell B.G."/>
        </authorList>
    </citation>
    <scope>NUCLEOTIDE SEQUENCE [LARGE SCALE GENOMIC DNA]</scope>
    <source>
        <strain evidence="9">3D7</strain>
    </source>
</reference>
<reference evidence="9" key="2">
    <citation type="journal article" date="2002" name="Nature">
        <title>Sequence of Plasmodium falciparum chromosomes 1, 3-9 and 13.</title>
        <authorList>
            <person name="Hall N."/>
            <person name="Pain A."/>
            <person name="Berriman M."/>
            <person name="Churcher C.M."/>
            <person name="Harris B."/>
            <person name="Harris D."/>
            <person name="Mungall K.L."/>
            <person name="Bowman S."/>
            <person name="Atkin R."/>
            <person name="Baker S."/>
            <person name="Barron A."/>
            <person name="Brooks K."/>
            <person name="Buckee C.O."/>
            <person name="Burrows C."/>
            <person name="Cherevach I."/>
            <person name="Chillingworth C."/>
            <person name="Chillingworth T."/>
            <person name="Christodoulou Z."/>
            <person name="Clark L."/>
            <person name="Clark R."/>
            <person name="Corton C."/>
            <person name="Cronin A."/>
            <person name="Davies R.M."/>
            <person name="Davis P."/>
            <person name="Dear P."/>
            <person name="Dearden F."/>
            <person name="Doggett J."/>
            <person name="Feltwell T."/>
            <person name="Goble A."/>
            <person name="Goodhead I."/>
            <person name="Gwilliam R."/>
            <person name="Hamlin N."/>
            <person name="Hance Z."/>
            <person name="Harper D."/>
            <person name="Hauser H."/>
            <person name="Hornsby T."/>
            <person name="Holroyd S."/>
            <person name="Horrocks P."/>
            <person name="Humphray S."/>
            <person name="Jagels K."/>
            <person name="James K.D."/>
            <person name="Johnson D."/>
            <person name="Kerhornou A."/>
            <person name="Knights A."/>
            <person name="Konfortov B."/>
            <person name="Kyes S."/>
            <person name="Larke N."/>
            <person name="Lawson D."/>
            <person name="Lennard N."/>
            <person name="Line A."/>
            <person name="Maddison M."/>
            <person name="Mclean J."/>
            <person name="Mooney P."/>
            <person name="Moule S."/>
            <person name="Murphy L."/>
            <person name="Oliver K."/>
            <person name="Ormond D."/>
            <person name="Price C."/>
            <person name="Quail M.A."/>
            <person name="Rabbinowitsch E."/>
            <person name="Rajandream M.A."/>
            <person name="Rutter S."/>
            <person name="Rutherford K.M."/>
            <person name="Sanders M."/>
            <person name="Simmonds M."/>
            <person name="Seeger K."/>
            <person name="Sharp S."/>
            <person name="Smith R."/>
            <person name="Squares R."/>
            <person name="Squares S."/>
            <person name="Stevens K."/>
            <person name="Taylor K."/>
            <person name="Tivey A."/>
            <person name="Unwin L."/>
            <person name="Whitehead S."/>
            <person name="Woodward J.R."/>
            <person name="Sulston J.E."/>
            <person name="Craig A."/>
            <person name="Newbold C."/>
            <person name="Barrell B.G."/>
        </authorList>
    </citation>
    <scope>NUCLEOTIDE SEQUENCE [LARGE SCALE GENOMIC DNA]</scope>
    <source>
        <strain evidence="9">3D7</strain>
    </source>
</reference>
<reference evidence="7" key="3">
    <citation type="journal article" date="2004" name="Mol. Biochem. Parasitol.">
        <title>Functional analysis of Plasmodium falciparum parasitophorous vacuole membrane protein (Pfs16) during gametocytogenesis and gametogenesis by targeted gene disruption.</title>
        <authorList>
            <person name="Kongkasuriyachai D."/>
            <person name="Fujioka H."/>
            <person name="Kumar N."/>
        </authorList>
    </citation>
    <scope>FUNCTION</scope>
    <scope>SUBCELLULAR LOCATION</scope>
    <scope>DEVELOPMENTAL STAGE</scope>
</reference>
<reference evidence="7" key="4">
    <citation type="journal article" date="2007" name="Exp. Parasitol.">
        <title>Plasmodium falciparum: mRNA co-expression and protein co-localisation of two gene products upregulated in early gametocytes.</title>
        <authorList>
            <person name="Lanfrancotti A."/>
            <person name="Bertuccini L."/>
            <person name="Silvestrini F."/>
            <person name="Alano P."/>
        </authorList>
    </citation>
    <scope>SUBCELLULAR LOCATION</scope>
    <scope>DEVELOPMENTAL STAGE</scope>
</reference>
<evidence type="ECO:0000250" key="1">
    <source>
        <dbReference type="UniProtKB" id="P17503"/>
    </source>
</evidence>
<evidence type="ECO:0000255" key="2"/>
<evidence type="ECO:0000256" key="3">
    <source>
        <dbReference type="SAM" id="MobiDB-lite"/>
    </source>
</evidence>
<evidence type="ECO:0000269" key="4">
    <source>
    </source>
</evidence>
<evidence type="ECO:0000269" key="5">
    <source>
    </source>
</evidence>
<evidence type="ECO:0000303" key="6">
    <source>
    </source>
</evidence>
<evidence type="ECO:0000305" key="7"/>
<evidence type="ECO:0000312" key="8">
    <source>
        <dbReference type="EMBL" id="CAD49155.1"/>
    </source>
</evidence>
<evidence type="ECO:0000312" key="9">
    <source>
        <dbReference type="Proteomes" id="UP000001450"/>
    </source>
</evidence>
<keyword id="KW-0472">Membrane</keyword>
<keyword id="KW-1185">Reference proteome</keyword>
<keyword id="KW-0732">Signal</keyword>
<keyword id="KW-0812">Transmembrane</keyword>
<keyword id="KW-1133">Transmembrane helix</keyword>
<keyword id="KW-0926">Vacuole</keyword>
<sequence>MNIRKFIPSLALMLIFFAFANLVLSDANDKAKKPAGKGSPSTLQTPGSSSGASLHAVGPNQGGLSQGLSGKDSADKMPLETQLAIEEIKSLSNMLDKKTTVNRNLIISTAVTNMIMLIILSGIVGFKVKKTKNADDDKGDKDKDKDNTDEGDEGDDS</sequence>
<name>PFS16_PLAF7</name>
<accession>Q6ZMA7</accession>
<feature type="signal peptide" evidence="2">
    <location>
        <begin position="1"/>
        <end position="25"/>
    </location>
</feature>
<feature type="chain" id="PRO_5004283215" description="Parasitophorous vacuole membrane protein S16" evidence="2">
    <location>
        <begin position="26"/>
        <end position="157"/>
    </location>
</feature>
<feature type="topological domain" description="Extracellular" evidence="7">
    <location>
        <begin position="26"/>
        <end position="105"/>
    </location>
</feature>
<feature type="transmembrane region" description="Helical" evidence="2">
    <location>
        <begin position="106"/>
        <end position="126"/>
    </location>
</feature>
<feature type="topological domain" description="Cytoplasmic" evidence="7">
    <location>
        <begin position="127"/>
        <end position="157"/>
    </location>
</feature>
<feature type="region of interest" description="Disordered" evidence="3">
    <location>
        <begin position="30"/>
        <end position="74"/>
    </location>
</feature>
<feature type="region of interest" description="Disordered" evidence="3">
    <location>
        <begin position="130"/>
        <end position="157"/>
    </location>
</feature>
<feature type="compositionally biased region" description="Polar residues" evidence="3">
    <location>
        <begin position="39"/>
        <end position="52"/>
    </location>
</feature>
<feature type="compositionally biased region" description="Basic and acidic residues" evidence="3">
    <location>
        <begin position="132"/>
        <end position="148"/>
    </location>
</feature>
<protein>
    <recommendedName>
        <fullName evidence="6">Parasitophorous vacuole membrane protein S16</fullName>
    </recommendedName>
    <alternativeName>
        <fullName evidence="1">Sexual stage-specific protein S16</fullName>
    </alternativeName>
</protein>
<comment type="function">
    <text evidence="1 4">Involved in male gametogenesis (PubMed:14698439). Required for exflagellation of male gametocytes (PubMed:14698439). May play a role in parasite transmission in the mosquito (By similarity). Binds to the mosquito vector midgut (By similarity).</text>
</comment>
<comment type="subcellular location">
    <subcellularLocation>
        <location evidence="4 5">Parasitophorous vacuole membrane</location>
        <topology evidence="7">Single-pass type I membrane protein</topology>
    </subcellularLocation>
    <subcellularLocation>
        <location evidence="5">Vacuole</location>
    </subcellularLocation>
    <text evidence="5">Localizes to the multi-laminate membrane whorls of the circular clefts in the infected erythrocyte cytoplasm and food vacuole membrane of the gametocyte.</text>
</comment>
<comment type="developmental stage">
    <text evidence="4 5">Expressed in gametocytes; expression starts in young gametocytes (30-40h post-invasion of host erythrocytes) (at protein level).</text>
</comment>
<dbReference type="EMBL" id="AL844503">
    <property type="protein sequence ID" value="CAD49155.1"/>
    <property type="molecule type" value="Genomic_DNA"/>
</dbReference>
<dbReference type="RefSeq" id="XP_001351375.1">
    <property type="nucleotide sequence ID" value="XM_001351339.1"/>
</dbReference>
<dbReference type="SMR" id="Q6ZMA7"/>
<dbReference type="FunCoup" id="Q6ZMA7">
    <property type="interactions" value="54"/>
</dbReference>
<dbReference type="IntAct" id="Q6ZMA7">
    <property type="interactions" value="3"/>
</dbReference>
<dbReference type="STRING" id="36329.Q6ZMA7"/>
<dbReference type="PaxDb" id="5833-PFD0310w"/>
<dbReference type="EnsemblProtists" id="CAD49155">
    <property type="protein sequence ID" value="CAD49155"/>
    <property type="gene ID" value="PF3D7_0406200"/>
</dbReference>
<dbReference type="GeneID" id="812396"/>
<dbReference type="KEGG" id="pfa:PF3D7_0406200"/>
<dbReference type="VEuPathDB" id="PlasmoDB:PF3D7_0406200"/>
<dbReference type="HOGENOM" id="CLU_1681428_0_0_1"/>
<dbReference type="InParanoid" id="Q6ZMA7"/>
<dbReference type="OMA" id="HICMHKE"/>
<dbReference type="OrthoDB" id="385615at2759"/>
<dbReference type="PhylomeDB" id="Q6ZMA7"/>
<dbReference type="Proteomes" id="UP000001450">
    <property type="component" value="Chromosome 4"/>
</dbReference>
<dbReference type="GO" id="GO:0016020">
    <property type="term" value="C:membrane"/>
    <property type="evidence" value="ECO:0007669"/>
    <property type="project" value="UniProtKB-KW"/>
</dbReference>
<dbReference type="GO" id="GO:0020005">
    <property type="term" value="C:symbiont-containing vacuole membrane"/>
    <property type="evidence" value="ECO:0000314"/>
    <property type="project" value="UniProtKB"/>
</dbReference>
<dbReference type="GO" id="GO:0005773">
    <property type="term" value="C:vacuole"/>
    <property type="evidence" value="ECO:0007669"/>
    <property type="project" value="UniProtKB-SubCell"/>
</dbReference>
<dbReference type="GO" id="GO:0048232">
    <property type="term" value="P:male gamete generation"/>
    <property type="evidence" value="ECO:0000314"/>
    <property type="project" value="UniProtKB"/>
</dbReference>
<dbReference type="Pfam" id="PF09716">
    <property type="entry name" value="ETRAMP"/>
    <property type="match status" value="1"/>
</dbReference>
<gene>
    <name evidence="6" type="primary">Pfs16</name>
    <name evidence="8" type="ORF">PF3D7_0406200</name>
</gene>
<proteinExistence type="evidence at protein level"/>
<organism evidence="9">
    <name type="scientific">Plasmodium falciparum (isolate 3D7)</name>
    <dbReference type="NCBI Taxonomy" id="36329"/>
    <lineage>
        <taxon>Eukaryota</taxon>
        <taxon>Sar</taxon>
        <taxon>Alveolata</taxon>
        <taxon>Apicomplexa</taxon>
        <taxon>Aconoidasida</taxon>
        <taxon>Haemosporida</taxon>
        <taxon>Plasmodiidae</taxon>
        <taxon>Plasmodium</taxon>
        <taxon>Plasmodium (Laverania)</taxon>
    </lineage>
</organism>